<sequence length="243" mass="26804">MRKIVIAGNWKMFKTQAETQEFLQGFLPHLEETPQGREVILCPPFTDLSVLSKTLHGSLIQLGAQNIHWEEFGAYTGEISGPMLTESGVRFVIVGHSERRQYFGETDATVNLRLRTAQRFGLTPILCVGETKQQRDAGETESLIALQLDKGLVDIDQNNLVIAYEPIWAIGTGETCEAVEANRIIGLIRSQLSNPNVSIQYGGSVKPNNIDEIMAQPEIDGVLVGGASLEPESFARIVNFHLV</sequence>
<comment type="function">
    <text evidence="1">Involved in the gluconeogenesis. Catalyzes stereospecifically the conversion of dihydroxyacetone phosphate (DHAP) to D-glyceraldehyde-3-phosphate (G3P).</text>
</comment>
<comment type="catalytic activity">
    <reaction evidence="1">
        <text>D-glyceraldehyde 3-phosphate = dihydroxyacetone phosphate</text>
        <dbReference type="Rhea" id="RHEA:18585"/>
        <dbReference type="ChEBI" id="CHEBI:57642"/>
        <dbReference type="ChEBI" id="CHEBI:59776"/>
        <dbReference type="EC" id="5.3.1.1"/>
    </reaction>
</comment>
<comment type="pathway">
    <text evidence="1">Carbohydrate biosynthesis; gluconeogenesis.</text>
</comment>
<comment type="pathway">
    <text evidence="1">Carbohydrate degradation; glycolysis; D-glyceraldehyde 3-phosphate from glycerone phosphate: step 1/1.</text>
</comment>
<comment type="subunit">
    <text evidence="1">Homodimer.</text>
</comment>
<comment type="subcellular location">
    <subcellularLocation>
        <location evidence="1">Cytoplasm</location>
    </subcellularLocation>
</comment>
<comment type="similarity">
    <text evidence="1">Belongs to the triosephosphate isomerase family.</text>
</comment>
<dbReference type="EC" id="5.3.1.1" evidence="1"/>
<dbReference type="EMBL" id="CP001037">
    <property type="protein sequence ID" value="ACC82697.1"/>
    <property type="molecule type" value="Genomic_DNA"/>
</dbReference>
<dbReference type="SMR" id="B2JA20"/>
<dbReference type="STRING" id="63737.Npun_R4322"/>
<dbReference type="EnsemblBacteria" id="ACC82697">
    <property type="protein sequence ID" value="ACC82697"/>
    <property type="gene ID" value="Npun_R4322"/>
</dbReference>
<dbReference type="KEGG" id="npu:Npun_R4322"/>
<dbReference type="eggNOG" id="COG0149">
    <property type="taxonomic scope" value="Bacteria"/>
</dbReference>
<dbReference type="HOGENOM" id="CLU_024251_2_3_3"/>
<dbReference type="OrthoDB" id="9809429at2"/>
<dbReference type="PhylomeDB" id="B2JA20"/>
<dbReference type="SABIO-RK" id="B2JA20"/>
<dbReference type="UniPathway" id="UPA00109">
    <property type="reaction ID" value="UER00189"/>
</dbReference>
<dbReference type="UniPathway" id="UPA00138"/>
<dbReference type="Proteomes" id="UP000001191">
    <property type="component" value="Chromosome"/>
</dbReference>
<dbReference type="GO" id="GO:0005829">
    <property type="term" value="C:cytosol"/>
    <property type="evidence" value="ECO:0007669"/>
    <property type="project" value="TreeGrafter"/>
</dbReference>
<dbReference type="GO" id="GO:0004807">
    <property type="term" value="F:triose-phosphate isomerase activity"/>
    <property type="evidence" value="ECO:0007669"/>
    <property type="project" value="UniProtKB-UniRule"/>
</dbReference>
<dbReference type="GO" id="GO:0006094">
    <property type="term" value="P:gluconeogenesis"/>
    <property type="evidence" value="ECO:0007669"/>
    <property type="project" value="UniProtKB-UniRule"/>
</dbReference>
<dbReference type="GO" id="GO:0046166">
    <property type="term" value="P:glyceraldehyde-3-phosphate biosynthetic process"/>
    <property type="evidence" value="ECO:0007669"/>
    <property type="project" value="TreeGrafter"/>
</dbReference>
<dbReference type="GO" id="GO:0019563">
    <property type="term" value="P:glycerol catabolic process"/>
    <property type="evidence" value="ECO:0007669"/>
    <property type="project" value="TreeGrafter"/>
</dbReference>
<dbReference type="GO" id="GO:0006096">
    <property type="term" value="P:glycolytic process"/>
    <property type="evidence" value="ECO:0007669"/>
    <property type="project" value="UniProtKB-UniRule"/>
</dbReference>
<dbReference type="CDD" id="cd00311">
    <property type="entry name" value="TIM"/>
    <property type="match status" value="1"/>
</dbReference>
<dbReference type="FunFam" id="3.20.20.70:FF:000016">
    <property type="entry name" value="Triosephosphate isomerase"/>
    <property type="match status" value="1"/>
</dbReference>
<dbReference type="Gene3D" id="3.20.20.70">
    <property type="entry name" value="Aldolase class I"/>
    <property type="match status" value="1"/>
</dbReference>
<dbReference type="HAMAP" id="MF_00147_B">
    <property type="entry name" value="TIM_B"/>
    <property type="match status" value="1"/>
</dbReference>
<dbReference type="InterPro" id="IPR013785">
    <property type="entry name" value="Aldolase_TIM"/>
</dbReference>
<dbReference type="InterPro" id="IPR035990">
    <property type="entry name" value="TIM_sf"/>
</dbReference>
<dbReference type="InterPro" id="IPR022896">
    <property type="entry name" value="TrioseP_Isoase_bac/euk"/>
</dbReference>
<dbReference type="InterPro" id="IPR000652">
    <property type="entry name" value="Triosephosphate_isomerase"/>
</dbReference>
<dbReference type="InterPro" id="IPR020861">
    <property type="entry name" value="Triosephosphate_isomerase_AS"/>
</dbReference>
<dbReference type="NCBIfam" id="TIGR00419">
    <property type="entry name" value="tim"/>
    <property type="match status" value="1"/>
</dbReference>
<dbReference type="PANTHER" id="PTHR21139">
    <property type="entry name" value="TRIOSEPHOSPHATE ISOMERASE"/>
    <property type="match status" value="1"/>
</dbReference>
<dbReference type="PANTHER" id="PTHR21139:SF42">
    <property type="entry name" value="TRIOSEPHOSPHATE ISOMERASE"/>
    <property type="match status" value="1"/>
</dbReference>
<dbReference type="Pfam" id="PF00121">
    <property type="entry name" value="TIM"/>
    <property type="match status" value="1"/>
</dbReference>
<dbReference type="SUPFAM" id="SSF51351">
    <property type="entry name" value="Triosephosphate isomerase (TIM)"/>
    <property type="match status" value="1"/>
</dbReference>
<dbReference type="PROSITE" id="PS00171">
    <property type="entry name" value="TIM_1"/>
    <property type="match status" value="1"/>
</dbReference>
<dbReference type="PROSITE" id="PS51440">
    <property type="entry name" value="TIM_2"/>
    <property type="match status" value="1"/>
</dbReference>
<accession>B2JA20</accession>
<evidence type="ECO:0000255" key="1">
    <source>
        <dbReference type="HAMAP-Rule" id="MF_00147"/>
    </source>
</evidence>
<name>TPIS_NOSP7</name>
<reference key="1">
    <citation type="journal article" date="2013" name="Plant Physiol.">
        <title>A Nostoc punctiforme Sugar Transporter Necessary to Establish a Cyanobacterium-Plant Symbiosis.</title>
        <authorList>
            <person name="Ekman M."/>
            <person name="Picossi S."/>
            <person name="Campbell E.L."/>
            <person name="Meeks J.C."/>
            <person name="Flores E."/>
        </authorList>
    </citation>
    <scope>NUCLEOTIDE SEQUENCE [LARGE SCALE GENOMIC DNA]</scope>
    <source>
        <strain>ATCC 29133 / PCC 73102</strain>
    </source>
</reference>
<proteinExistence type="inferred from homology"/>
<protein>
    <recommendedName>
        <fullName evidence="1">Triosephosphate isomerase</fullName>
        <shortName evidence="1">TIM</shortName>
        <shortName evidence="1">TPI</shortName>
        <ecNumber evidence="1">5.3.1.1</ecNumber>
    </recommendedName>
    <alternativeName>
        <fullName evidence="1">Triose-phosphate isomerase</fullName>
    </alternativeName>
</protein>
<feature type="chain" id="PRO_1000096515" description="Triosephosphate isomerase">
    <location>
        <begin position="1"/>
        <end position="243"/>
    </location>
</feature>
<feature type="active site" description="Electrophile" evidence="1">
    <location>
        <position position="96"/>
    </location>
</feature>
<feature type="active site" description="Proton acceptor" evidence="1">
    <location>
        <position position="165"/>
    </location>
</feature>
<feature type="binding site" evidence="1">
    <location>
        <begin position="9"/>
        <end position="11"/>
    </location>
    <ligand>
        <name>substrate</name>
    </ligand>
</feature>
<feature type="binding site" evidence="1">
    <location>
        <position position="171"/>
    </location>
    <ligand>
        <name>substrate</name>
    </ligand>
</feature>
<feature type="binding site" evidence="1">
    <location>
        <position position="204"/>
    </location>
    <ligand>
        <name>substrate</name>
    </ligand>
</feature>
<feature type="binding site" evidence="1">
    <location>
        <begin position="225"/>
        <end position="226"/>
    </location>
    <ligand>
        <name>substrate</name>
    </ligand>
</feature>
<gene>
    <name evidence="1" type="primary">tpiA</name>
    <name type="ordered locus">Npun_R4322</name>
</gene>
<keyword id="KW-0963">Cytoplasm</keyword>
<keyword id="KW-0312">Gluconeogenesis</keyword>
<keyword id="KW-0324">Glycolysis</keyword>
<keyword id="KW-0413">Isomerase</keyword>
<keyword id="KW-1185">Reference proteome</keyword>
<organism>
    <name type="scientific">Nostoc punctiforme (strain ATCC 29133 / PCC 73102)</name>
    <dbReference type="NCBI Taxonomy" id="63737"/>
    <lineage>
        <taxon>Bacteria</taxon>
        <taxon>Bacillati</taxon>
        <taxon>Cyanobacteriota</taxon>
        <taxon>Cyanophyceae</taxon>
        <taxon>Nostocales</taxon>
        <taxon>Nostocaceae</taxon>
        <taxon>Nostoc</taxon>
    </lineage>
</organism>